<accession>A6S8E7</accession>
<accession>A0A384JVW7</accession>
<gene>
    <name type="primary">trm8</name>
    <name type="ORF">BC1G_09638</name>
    <name type="ORF">BCIN_11g00460</name>
</gene>
<organism>
    <name type="scientific">Botryotinia fuckeliana (strain B05.10)</name>
    <name type="common">Noble rot fungus</name>
    <name type="synonym">Botrytis cinerea</name>
    <dbReference type="NCBI Taxonomy" id="332648"/>
    <lineage>
        <taxon>Eukaryota</taxon>
        <taxon>Fungi</taxon>
        <taxon>Dikarya</taxon>
        <taxon>Ascomycota</taxon>
        <taxon>Pezizomycotina</taxon>
        <taxon>Leotiomycetes</taxon>
        <taxon>Helotiales</taxon>
        <taxon>Sclerotiniaceae</taxon>
        <taxon>Botrytis</taxon>
    </lineage>
</organism>
<proteinExistence type="inferred from homology"/>
<comment type="function">
    <text evidence="1">Catalyzes the formation of N(7)-methylguanine at position 46 (m7G46) in tRNA.</text>
</comment>
<comment type="catalytic activity">
    <reaction evidence="1">
        <text>guanosine(46) in tRNA + S-adenosyl-L-methionine = N(7)-methylguanosine(46) in tRNA + S-adenosyl-L-homocysteine</text>
        <dbReference type="Rhea" id="RHEA:42708"/>
        <dbReference type="Rhea" id="RHEA-COMP:10188"/>
        <dbReference type="Rhea" id="RHEA-COMP:10189"/>
        <dbReference type="ChEBI" id="CHEBI:57856"/>
        <dbReference type="ChEBI" id="CHEBI:59789"/>
        <dbReference type="ChEBI" id="CHEBI:74269"/>
        <dbReference type="ChEBI" id="CHEBI:74480"/>
        <dbReference type="EC" id="2.1.1.33"/>
    </reaction>
</comment>
<comment type="pathway">
    <text evidence="1">tRNA modification; N(7)-methylguanine-tRNA biosynthesis.</text>
</comment>
<comment type="subunit">
    <text evidence="1">Forms a complex with trm82.</text>
</comment>
<comment type="subcellular location">
    <subcellularLocation>
        <location evidence="1">Nucleus</location>
    </subcellularLocation>
</comment>
<comment type="similarity">
    <text evidence="1">Belongs to the class I-like SAM-binding methyltransferase superfamily. TrmB family.</text>
</comment>
<name>TRMB_BOTFB</name>
<dbReference type="EC" id="2.1.1.33" evidence="1"/>
<dbReference type="EMBL" id="CP009815">
    <property type="protein sequence ID" value="ATZ54700.1"/>
    <property type="molecule type" value="Genomic_DNA"/>
</dbReference>
<dbReference type="SMR" id="A6S8E7"/>
<dbReference type="EnsemblFungi" id="Bcin11g00460.1">
    <property type="protein sequence ID" value="Bcin11p00460.1"/>
    <property type="gene ID" value="Bcin11g00460"/>
</dbReference>
<dbReference type="GeneID" id="5432926"/>
<dbReference type="KEGG" id="bfu:BCIN_11g00460"/>
<dbReference type="VEuPathDB" id="FungiDB:Bcin11g00460"/>
<dbReference type="OMA" id="LPNYFAK"/>
<dbReference type="OrthoDB" id="47276at2759"/>
<dbReference type="UniPathway" id="UPA00989"/>
<dbReference type="Proteomes" id="UP000001798">
    <property type="component" value="Chromosome bcin11"/>
</dbReference>
<dbReference type="GO" id="GO:0005634">
    <property type="term" value="C:nucleus"/>
    <property type="evidence" value="ECO:0007669"/>
    <property type="project" value="UniProtKB-SubCell"/>
</dbReference>
<dbReference type="GO" id="GO:0043527">
    <property type="term" value="C:tRNA methyltransferase complex"/>
    <property type="evidence" value="ECO:0007669"/>
    <property type="project" value="TreeGrafter"/>
</dbReference>
<dbReference type="GO" id="GO:0008176">
    <property type="term" value="F:tRNA (guanine(46)-N7)-methyltransferase activity"/>
    <property type="evidence" value="ECO:0007669"/>
    <property type="project" value="UniProtKB-UniRule"/>
</dbReference>
<dbReference type="GO" id="GO:0000049">
    <property type="term" value="F:tRNA binding"/>
    <property type="evidence" value="ECO:0007669"/>
    <property type="project" value="UniProtKB-UniRule"/>
</dbReference>
<dbReference type="CDD" id="cd02440">
    <property type="entry name" value="AdoMet_MTases"/>
    <property type="match status" value="1"/>
</dbReference>
<dbReference type="FunFam" id="3.40.50.150:FF:000060">
    <property type="entry name" value="tRNA (guanine-N(7)-)-methyltransferase"/>
    <property type="match status" value="1"/>
</dbReference>
<dbReference type="Gene3D" id="3.40.50.150">
    <property type="entry name" value="Vaccinia Virus protein VP39"/>
    <property type="match status" value="1"/>
</dbReference>
<dbReference type="HAMAP" id="MF_03055">
    <property type="entry name" value="tRNA_methyltr_TrmB_euk"/>
    <property type="match status" value="1"/>
</dbReference>
<dbReference type="InterPro" id="IPR029063">
    <property type="entry name" value="SAM-dependent_MTases_sf"/>
</dbReference>
<dbReference type="InterPro" id="IPR025763">
    <property type="entry name" value="Trm8_euk"/>
</dbReference>
<dbReference type="InterPro" id="IPR003358">
    <property type="entry name" value="tRNA_(Gua-N-7)_MeTrfase_Trmb"/>
</dbReference>
<dbReference type="NCBIfam" id="TIGR00091">
    <property type="entry name" value="tRNA (guanosine(46)-N7)-methyltransferase TrmB"/>
    <property type="match status" value="1"/>
</dbReference>
<dbReference type="PANTHER" id="PTHR23417">
    <property type="entry name" value="3-DEOXY-D-MANNO-OCTULOSONIC-ACID TRANSFERASE/TRNA GUANINE-N 7 - -METHYLTRANSFERASE"/>
    <property type="match status" value="1"/>
</dbReference>
<dbReference type="PANTHER" id="PTHR23417:SF16">
    <property type="entry name" value="TRNA (GUANINE-N(7)-)-METHYLTRANSFERASE"/>
    <property type="match status" value="1"/>
</dbReference>
<dbReference type="Pfam" id="PF02390">
    <property type="entry name" value="Methyltransf_4"/>
    <property type="match status" value="1"/>
</dbReference>
<dbReference type="SUPFAM" id="SSF53335">
    <property type="entry name" value="S-adenosyl-L-methionine-dependent methyltransferases"/>
    <property type="match status" value="1"/>
</dbReference>
<dbReference type="PROSITE" id="PS51625">
    <property type="entry name" value="SAM_MT_TRMB"/>
    <property type="match status" value="1"/>
</dbReference>
<feature type="chain" id="PRO_0000370590" description="tRNA (guanine-N(7)-)-methyltransferase">
    <location>
        <begin position="1"/>
        <end position="282"/>
    </location>
</feature>
<feature type="region of interest" description="Disordered" evidence="2">
    <location>
        <begin position="1"/>
        <end position="36"/>
    </location>
</feature>
<feature type="compositionally biased region" description="Basic and acidic residues" evidence="2">
    <location>
        <begin position="10"/>
        <end position="29"/>
    </location>
</feature>
<feature type="active site" evidence="1">
    <location>
        <position position="181"/>
    </location>
</feature>
<feature type="binding site" evidence="1">
    <location>
        <position position="100"/>
    </location>
    <ligand>
        <name>S-adenosyl-L-methionine</name>
        <dbReference type="ChEBI" id="CHEBI:59789"/>
    </ligand>
</feature>
<feature type="binding site" evidence="1">
    <location>
        <begin position="123"/>
        <end position="124"/>
    </location>
    <ligand>
        <name>S-adenosyl-L-methionine</name>
        <dbReference type="ChEBI" id="CHEBI:59789"/>
    </ligand>
</feature>
<feature type="binding site" evidence="1">
    <location>
        <begin position="158"/>
        <end position="159"/>
    </location>
    <ligand>
        <name>S-adenosyl-L-methionine</name>
        <dbReference type="ChEBI" id="CHEBI:59789"/>
    </ligand>
</feature>
<feature type="binding site" evidence="1">
    <location>
        <position position="178"/>
    </location>
    <ligand>
        <name>S-adenosyl-L-methionine</name>
        <dbReference type="ChEBI" id="CHEBI:59789"/>
    </ligand>
</feature>
<feature type="binding site" evidence="1">
    <location>
        <begin position="256"/>
        <end position="258"/>
    </location>
    <ligand>
        <name>S-adenosyl-L-methionine</name>
        <dbReference type="ChEBI" id="CHEBI:59789"/>
    </ligand>
</feature>
<sequence>MAGPPNKKQKREDYRTARENGEESKELPKKKFYRQRAHANPFSDHRLAYPASPAQMDWASHYPAYAESAAASEGTEEPSTGSDSSSLKKLKQDVEVADIGCGFGGLTVALAPKLPNSLILGMEIRAQVTEYVQERIKALRVQEKESGLFQNASCIRANTMKFMPNFFKKHQLSKIFLCFPDPHFKARKHKARIVSTTLAAEYAYVVRPGGIIYTITDVEDLHNWMVTHFNAHPTFERVAEEEQEADECVNIMRTETEEGKKVTRNNGPKFVALFKRLEDPPW</sequence>
<reference key="1">
    <citation type="journal article" date="2011" name="PLoS Genet.">
        <title>Genomic analysis of the necrotrophic fungal pathogens Sclerotinia sclerotiorum and Botrytis cinerea.</title>
        <authorList>
            <person name="Amselem J."/>
            <person name="Cuomo C.A."/>
            <person name="van Kan J.A.L."/>
            <person name="Viaud M."/>
            <person name="Benito E.P."/>
            <person name="Couloux A."/>
            <person name="Coutinho P.M."/>
            <person name="de Vries R.P."/>
            <person name="Dyer P.S."/>
            <person name="Fillinger S."/>
            <person name="Fournier E."/>
            <person name="Gout L."/>
            <person name="Hahn M."/>
            <person name="Kohn L."/>
            <person name="Lapalu N."/>
            <person name="Plummer K.M."/>
            <person name="Pradier J.-M."/>
            <person name="Quevillon E."/>
            <person name="Sharon A."/>
            <person name="Simon A."/>
            <person name="ten Have A."/>
            <person name="Tudzynski B."/>
            <person name="Tudzynski P."/>
            <person name="Wincker P."/>
            <person name="Andrew M."/>
            <person name="Anthouard V."/>
            <person name="Beever R.E."/>
            <person name="Beffa R."/>
            <person name="Benoit I."/>
            <person name="Bouzid O."/>
            <person name="Brault B."/>
            <person name="Chen Z."/>
            <person name="Choquer M."/>
            <person name="Collemare J."/>
            <person name="Cotton P."/>
            <person name="Danchin E.G."/>
            <person name="Da Silva C."/>
            <person name="Gautier A."/>
            <person name="Giraud C."/>
            <person name="Giraud T."/>
            <person name="Gonzalez C."/>
            <person name="Grossetete S."/>
            <person name="Gueldener U."/>
            <person name="Henrissat B."/>
            <person name="Howlett B.J."/>
            <person name="Kodira C."/>
            <person name="Kretschmer M."/>
            <person name="Lappartient A."/>
            <person name="Leroch M."/>
            <person name="Levis C."/>
            <person name="Mauceli E."/>
            <person name="Neuveglise C."/>
            <person name="Oeser B."/>
            <person name="Pearson M."/>
            <person name="Poulain J."/>
            <person name="Poussereau N."/>
            <person name="Quesneville H."/>
            <person name="Rascle C."/>
            <person name="Schumacher J."/>
            <person name="Segurens B."/>
            <person name="Sexton A."/>
            <person name="Silva E."/>
            <person name="Sirven C."/>
            <person name="Soanes D.M."/>
            <person name="Talbot N.J."/>
            <person name="Templeton M."/>
            <person name="Yandava C."/>
            <person name="Yarden O."/>
            <person name="Zeng Q."/>
            <person name="Rollins J.A."/>
            <person name="Lebrun M.-H."/>
            <person name="Dickman M."/>
        </authorList>
    </citation>
    <scope>NUCLEOTIDE SEQUENCE [LARGE SCALE GENOMIC DNA]</scope>
    <source>
        <strain>B05.10</strain>
    </source>
</reference>
<reference key="2">
    <citation type="journal article" date="2012" name="Eukaryot. Cell">
        <title>Genome update of Botrytis cinerea strains B05.10 and T4.</title>
        <authorList>
            <person name="Staats M."/>
            <person name="van Kan J.A.L."/>
        </authorList>
    </citation>
    <scope>NUCLEOTIDE SEQUENCE [LARGE SCALE GENOMIC DNA]</scope>
    <scope>GENOME REANNOTATION</scope>
    <source>
        <strain>B05.10</strain>
    </source>
</reference>
<reference key="3">
    <citation type="journal article" date="2017" name="Mol. Plant Pathol.">
        <title>A gapless genome sequence of the fungus Botrytis cinerea.</title>
        <authorList>
            <person name="van Kan J.A.L."/>
            <person name="Stassen J.H.M."/>
            <person name="Mosbach A."/>
            <person name="van der Lee T.A.J."/>
            <person name="Faino L."/>
            <person name="Farmer A.D."/>
            <person name="Papasotiriou D.G."/>
            <person name="Zhou S."/>
            <person name="Seidl M.F."/>
            <person name="Cottam E."/>
            <person name="Edel D."/>
            <person name="Hahn M."/>
            <person name="Schwartz D.C."/>
            <person name="Dietrich R.A."/>
            <person name="Widdison S."/>
            <person name="Scalliet G."/>
        </authorList>
    </citation>
    <scope>NUCLEOTIDE SEQUENCE [LARGE SCALE GENOMIC DNA]</scope>
    <scope>GENOME REANNOTATION</scope>
    <source>
        <strain>B05.10</strain>
    </source>
</reference>
<protein>
    <recommendedName>
        <fullName evidence="1">tRNA (guanine-N(7)-)-methyltransferase</fullName>
        <ecNumber evidence="1">2.1.1.33</ecNumber>
    </recommendedName>
    <alternativeName>
        <fullName evidence="1">Transfer RNA methyltransferase 8</fullName>
    </alternativeName>
    <alternativeName>
        <fullName evidence="1">tRNA (guanine(46)-N(7))-methyltransferase</fullName>
    </alternativeName>
    <alternativeName>
        <fullName evidence="1">tRNA(m7G46)-methyltransferase</fullName>
    </alternativeName>
</protein>
<keyword id="KW-0489">Methyltransferase</keyword>
<keyword id="KW-0539">Nucleus</keyword>
<keyword id="KW-1185">Reference proteome</keyword>
<keyword id="KW-0694">RNA-binding</keyword>
<keyword id="KW-0949">S-adenosyl-L-methionine</keyword>
<keyword id="KW-0808">Transferase</keyword>
<keyword id="KW-0819">tRNA processing</keyword>
<keyword id="KW-0820">tRNA-binding</keyword>
<evidence type="ECO:0000255" key="1">
    <source>
        <dbReference type="HAMAP-Rule" id="MF_03055"/>
    </source>
</evidence>
<evidence type="ECO:0000256" key="2">
    <source>
        <dbReference type="SAM" id="MobiDB-lite"/>
    </source>
</evidence>